<proteinExistence type="predicted"/>
<organism>
    <name type="scientific">Bacillus subtilis (strain 168)</name>
    <dbReference type="NCBI Taxonomy" id="224308"/>
    <lineage>
        <taxon>Bacteria</taxon>
        <taxon>Bacillati</taxon>
        <taxon>Bacillota</taxon>
        <taxon>Bacilli</taxon>
        <taxon>Bacillales</taxon>
        <taxon>Bacillaceae</taxon>
        <taxon>Bacillus</taxon>
    </lineage>
</organism>
<sequence length="267" mass="30618">MTEERKETFEEEINQSERIDADEEPLSRMSRKASRQSKQKQKQKQKPRQERGESTVKDKLASVWAAINRYCGFAFSILKSPAKTVVTDGFSHYKYGLISMLIFSIIFSIGNWFQLKASWNRPLGFGERHHAFYDGFLVVLVYLLIFFAVMVFAIWAVSRYMMKQKVTFREAAAVLGSLLVPVIAVSILWLIFAIVNIPMLTVLFTVLILFSIFFIIALYVQRVYQAAQDAPIDYIYCVFAVVAIALLFTAVTWPFISEYITASLIPL</sequence>
<keyword id="KW-1003">Cell membrane</keyword>
<keyword id="KW-0472">Membrane</keyword>
<keyword id="KW-1185">Reference proteome</keyword>
<keyword id="KW-0812">Transmembrane</keyword>
<keyword id="KW-1133">Transmembrane helix</keyword>
<reference key="1">
    <citation type="journal article" date="1996" name="Microbiology">
        <title>The 52 degrees-55 degrees segment of the Bacillus subtilis chromosome: a region devoted to purine uptake and metabolism, and containing the genes cotA, gabP and guaA and the pur gene cluster within a 34960 bp nucleotide sequence.</title>
        <authorList>
            <person name="Borriss R."/>
            <person name="Porwollik S."/>
            <person name="Schroeter R."/>
        </authorList>
    </citation>
    <scope>NUCLEOTIDE SEQUENCE [GENOMIC DNA]</scope>
    <source>
        <strain>168</strain>
    </source>
</reference>
<reference key="2">
    <citation type="journal article" date="1997" name="Nature">
        <title>The complete genome sequence of the Gram-positive bacterium Bacillus subtilis.</title>
        <authorList>
            <person name="Kunst F."/>
            <person name="Ogasawara N."/>
            <person name="Moszer I."/>
            <person name="Albertini A.M."/>
            <person name="Alloni G."/>
            <person name="Azevedo V."/>
            <person name="Bertero M.G."/>
            <person name="Bessieres P."/>
            <person name="Bolotin A."/>
            <person name="Borchert S."/>
            <person name="Borriss R."/>
            <person name="Boursier L."/>
            <person name="Brans A."/>
            <person name="Braun M."/>
            <person name="Brignell S.C."/>
            <person name="Bron S."/>
            <person name="Brouillet S."/>
            <person name="Bruschi C.V."/>
            <person name="Caldwell B."/>
            <person name="Capuano V."/>
            <person name="Carter N.M."/>
            <person name="Choi S.-K."/>
            <person name="Codani J.-J."/>
            <person name="Connerton I.F."/>
            <person name="Cummings N.J."/>
            <person name="Daniel R.A."/>
            <person name="Denizot F."/>
            <person name="Devine K.M."/>
            <person name="Duesterhoeft A."/>
            <person name="Ehrlich S.D."/>
            <person name="Emmerson P.T."/>
            <person name="Entian K.-D."/>
            <person name="Errington J."/>
            <person name="Fabret C."/>
            <person name="Ferrari E."/>
            <person name="Foulger D."/>
            <person name="Fritz C."/>
            <person name="Fujita M."/>
            <person name="Fujita Y."/>
            <person name="Fuma S."/>
            <person name="Galizzi A."/>
            <person name="Galleron N."/>
            <person name="Ghim S.-Y."/>
            <person name="Glaser P."/>
            <person name="Goffeau A."/>
            <person name="Golightly E.J."/>
            <person name="Grandi G."/>
            <person name="Guiseppi G."/>
            <person name="Guy B.J."/>
            <person name="Haga K."/>
            <person name="Haiech J."/>
            <person name="Harwood C.R."/>
            <person name="Henaut A."/>
            <person name="Hilbert H."/>
            <person name="Holsappel S."/>
            <person name="Hosono S."/>
            <person name="Hullo M.-F."/>
            <person name="Itaya M."/>
            <person name="Jones L.-M."/>
            <person name="Joris B."/>
            <person name="Karamata D."/>
            <person name="Kasahara Y."/>
            <person name="Klaerr-Blanchard M."/>
            <person name="Klein C."/>
            <person name="Kobayashi Y."/>
            <person name="Koetter P."/>
            <person name="Koningstein G."/>
            <person name="Krogh S."/>
            <person name="Kumano M."/>
            <person name="Kurita K."/>
            <person name="Lapidus A."/>
            <person name="Lardinois S."/>
            <person name="Lauber J."/>
            <person name="Lazarevic V."/>
            <person name="Lee S.-M."/>
            <person name="Levine A."/>
            <person name="Liu H."/>
            <person name="Masuda S."/>
            <person name="Mauel C."/>
            <person name="Medigue C."/>
            <person name="Medina N."/>
            <person name="Mellado R.P."/>
            <person name="Mizuno M."/>
            <person name="Moestl D."/>
            <person name="Nakai S."/>
            <person name="Noback M."/>
            <person name="Noone D."/>
            <person name="O'Reilly M."/>
            <person name="Ogawa K."/>
            <person name="Ogiwara A."/>
            <person name="Oudega B."/>
            <person name="Park S.-H."/>
            <person name="Parro V."/>
            <person name="Pohl T.M."/>
            <person name="Portetelle D."/>
            <person name="Porwollik S."/>
            <person name="Prescott A.M."/>
            <person name="Presecan E."/>
            <person name="Pujic P."/>
            <person name="Purnelle B."/>
            <person name="Rapoport G."/>
            <person name="Rey M."/>
            <person name="Reynolds S."/>
            <person name="Rieger M."/>
            <person name="Rivolta C."/>
            <person name="Rocha E."/>
            <person name="Roche B."/>
            <person name="Rose M."/>
            <person name="Sadaie Y."/>
            <person name="Sato T."/>
            <person name="Scanlan E."/>
            <person name="Schleich S."/>
            <person name="Schroeter R."/>
            <person name="Scoffone F."/>
            <person name="Sekiguchi J."/>
            <person name="Sekowska A."/>
            <person name="Seror S.J."/>
            <person name="Serror P."/>
            <person name="Shin B.-S."/>
            <person name="Soldo B."/>
            <person name="Sorokin A."/>
            <person name="Tacconi E."/>
            <person name="Takagi T."/>
            <person name="Takahashi H."/>
            <person name="Takemaru K."/>
            <person name="Takeuchi M."/>
            <person name="Tamakoshi A."/>
            <person name="Tanaka T."/>
            <person name="Terpstra P."/>
            <person name="Tognoni A."/>
            <person name="Tosato V."/>
            <person name="Uchiyama S."/>
            <person name="Vandenbol M."/>
            <person name="Vannier F."/>
            <person name="Vassarotti A."/>
            <person name="Viari A."/>
            <person name="Wambutt R."/>
            <person name="Wedler E."/>
            <person name="Wedler H."/>
            <person name="Weitzenegger T."/>
            <person name="Winters P."/>
            <person name="Wipat A."/>
            <person name="Yamamoto H."/>
            <person name="Yamane K."/>
            <person name="Yasumoto K."/>
            <person name="Yata K."/>
            <person name="Yoshida K."/>
            <person name="Yoshikawa H.-F."/>
            <person name="Zumstein E."/>
            <person name="Yoshikawa H."/>
            <person name="Danchin A."/>
        </authorList>
    </citation>
    <scope>NUCLEOTIDE SEQUENCE [LARGE SCALE GENOMIC DNA]</scope>
    <source>
        <strain>168</strain>
    </source>
</reference>
<reference key="3">
    <citation type="journal article" date="1999" name="Genome Res.">
        <title>Detecting and analyzing DNA sequencing errors: toward a higher quality of the Bacillus subtilis genome sequence.</title>
        <authorList>
            <person name="Medigue C."/>
            <person name="Rose M."/>
            <person name="Viari A."/>
            <person name="Danchin A."/>
        </authorList>
    </citation>
    <scope>SEQUENCE REVISION</scope>
</reference>
<evidence type="ECO:0000255" key="1"/>
<evidence type="ECO:0000256" key="2">
    <source>
        <dbReference type="SAM" id="MobiDB-lite"/>
    </source>
</evidence>
<evidence type="ECO:0000305" key="3"/>
<gene>
    <name type="primary">yebC</name>
    <name type="ordered locus">BSU06380</name>
</gene>
<comment type="subcellular location">
    <subcellularLocation>
        <location evidence="3">Cell membrane</location>
        <topology evidence="3">Multi-pass membrane protein</topology>
    </subcellularLocation>
</comment>
<comment type="sequence caution" evidence="3">
    <conflict type="frameshift">
        <sequence resource="EMBL-CDS" id="AAB62313"/>
    </conflict>
</comment>
<name>YEBC_BACSU</name>
<feature type="chain" id="PRO_0000049515" description="Uncharacterized protein YebC">
    <location>
        <begin position="1"/>
        <end position="267"/>
    </location>
</feature>
<feature type="transmembrane region" description="Helical" evidence="1">
    <location>
        <begin position="93"/>
        <end position="115"/>
    </location>
</feature>
<feature type="transmembrane region" description="Helical" evidence="1">
    <location>
        <begin position="135"/>
        <end position="157"/>
    </location>
</feature>
<feature type="transmembrane region" description="Helical" evidence="1">
    <location>
        <begin position="173"/>
        <end position="195"/>
    </location>
</feature>
<feature type="transmembrane region" description="Helical" evidence="1">
    <location>
        <begin position="199"/>
        <end position="221"/>
    </location>
</feature>
<feature type="transmembrane region" description="Helical" evidence="1">
    <location>
        <begin position="234"/>
        <end position="256"/>
    </location>
</feature>
<feature type="region of interest" description="Disordered" evidence="2">
    <location>
        <begin position="1"/>
        <end position="55"/>
    </location>
</feature>
<feature type="compositionally biased region" description="Acidic residues" evidence="2">
    <location>
        <begin position="9"/>
        <end position="24"/>
    </location>
</feature>
<feature type="compositionally biased region" description="Basic residues" evidence="2">
    <location>
        <begin position="29"/>
        <end position="46"/>
    </location>
</feature>
<accession>O34341</accession>
<dbReference type="EMBL" id="U51115">
    <property type="protein sequence ID" value="AAB62313.1"/>
    <property type="status" value="ALT_FRAME"/>
    <property type="molecule type" value="Genomic_DNA"/>
</dbReference>
<dbReference type="EMBL" id="AL009126">
    <property type="protein sequence ID" value="CAB12457.2"/>
    <property type="molecule type" value="Genomic_DNA"/>
</dbReference>
<dbReference type="PIR" id="G69791">
    <property type="entry name" value="G69791"/>
</dbReference>
<dbReference type="RefSeq" id="NP_388519.2">
    <property type="nucleotide sequence ID" value="NC_000964.3"/>
</dbReference>
<dbReference type="RefSeq" id="WP_003242783.1">
    <property type="nucleotide sequence ID" value="NZ_OZ025638.1"/>
</dbReference>
<dbReference type="FunCoup" id="O34341">
    <property type="interactions" value="22"/>
</dbReference>
<dbReference type="IntAct" id="O34341">
    <property type="interactions" value="1"/>
</dbReference>
<dbReference type="STRING" id="224308.BSU06380"/>
<dbReference type="PaxDb" id="224308-BSU06380"/>
<dbReference type="EnsemblBacteria" id="CAB12457">
    <property type="protein sequence ID" value="CAB12457"/>
    <property type="gene ID" value="BSU_06380"/>
</dbReference>
<dbReference type="GeneID" id="939478"/>
<dbReference type="KEGG" id="bsu:BSU06380"/>
<dbReference type="PATRIC" id="fig|224308.179.peg.694"/>
<dbReference type="eggNOG" id="COG3064">
    <property type="taxonomic scope" value="Bacteria"/>
</dbReference>
<dbReference type="InParanoid" id="O34341"/>
<dbReference type="OrthoDB" id="2940684at2"/>
<dbReference type="BioCyc" id="BSUB:BSU06380-MONOMER"/>
<dbReference type="Proteomes" id="UP000001570">
    <property type="component" value="Chromosome"/>
</dbReference>
<dbReference type="GO" id="GO:0005886">
    <property type="term" value="C:plasma membrane"/>
    <property type="evidence" value="ECO:0007669"/>
    <property type="project" value="UniProtKB-SubCell"/>
</dbReference>
<protein>
    <recommendedName>
        <fullName>Uncharacterized protein YebC</fullName>
    </recommendedName>
</protein>